<protein>
    <recommendedName>
        <fullName evidence="1">Pantothenate kinase</fullName>
        <ecNumber evidence="1">2.7.1.33</ecNumber>
    </recommendedName>
    <alternativeName>
        <fullName evidence="1">Pantothenic acid kinase</fullName>
    </alternativeName>
</protein>
<evidence type="ECO:0000255" key="1">
    <source>
        <dbReference type="HAMAP-Rule" id="MF_00215"/>
    </source>
</evidence>
<gene>
    <name evidence="1" type="primary">coaA</name>
    <name type="ordered locus">COXBURSA331_A0294</name>
</gene>
<dbReference type="EC" id="2.7.1.33" evidence="1"/>
<dbReference type="EMBL" id="CP000890">
    <property type="protein sequence ID" value="ABX77616.1"/>
    <property type="molecule type" value="Genomic_DNA"/>
</dbReference>
<dbReference type="RefSeq" id="WP_005771577.1">
    <property type="nucleotide sequence ID" value="NC_010117.1"/>
</dbReference>
<dbReference type="SMR" id="A9NAJ3"/>
<dbReference type="KEGG" id="cbs:COXBURSA331_A0294"/>
<dbReference type="HOGENOM" id="CLU_053818_1_1_6"/>
<dbReference type="UniPathway" id="UPA00241">
    <property type="reaction ID" value="UER00352"/>
</dbReference>
<dbReference type="GO" id="GO:0005737">
    <property type="term" value="C:cytoplasm"/>
    <property type="evidence" value="ECO:0007669"/>
    <property type="project" value="UniProtKB-SubCell"/>
</dbReference>
<dbReference type="GO" id="GO:0005524">
    <property type="term" value="F:ATP binding"/>
    <property type="evidence" value="ECO:0007669"/>
    <property type="project" value="UniProtKB-UniRule"/>
</dbReference>
<dbReference type="GO" id="GO:0004594">
    <property type="term" value="F:pantothenate kinase activity"/>
    <property type="evidence" value="ECO:0007669"/>
    <property type="project" value="UniProtKB-UniRule"/>
</dbReference>
<dbReference type="GO" id="GO:0015937">
    <property type="term" value="P:coenzyme A biosynthetic process"/>
    <property type="evidence" value="ECO:0007669"/>
    <property type="project" value="UniProtKB-UniRule"/>
</dbReference>
<dbReference type="CDD" id="cd02025">
    <property type="entry name" value="PanK"/>
    <property type="match status" value="1"/>
</dbReference>
<dbReference type="FunFam" id="3.40.50.300:FF:000242">
    <property type="entry name" value="Pantothenate kinase"/>
    <property type="match status" value="1"/>
</dbReference>
<dbReference type="Gene3D" id="3.40.50.300">
    <property type="entry name" value="P-loop containing nucleotide triphosphate hydrolases"/>
    <property type="match status" value="1"/>
</dbReference>
<dbReference type="HAMAP" id="MF_00215">
    <property type="entry name" value="Pantothen_kinase_1"/>
    <property type="match status" value="1"/>
</dbReference>
<dbReference type="InterPro" id="IPR027417">
    <property type="entry name" value="P-loop_NTPase"/>
</dbReference>
<dbReference type="InterPro" id="IPR004566">
    <property type="entry name" value="PanK"/>
</dbReference>
<dbReference type="InterPro" id="IPR006083">
    <property type="entry name" value="PRK/URK"/>
</dbReference>
<dbReference type="NCBIfam" id="TIGR00554">
    <property type="entry name" value="panK_bact"/>
    <property type="match status" value="1"/>
</dbReference>
<dbReference type="PANTHER" id="PTHR10285">
    <property type="entry name" value="URIDINE KINASE"/>
    <property type="match status" value="1"/>
</dbReference>
<dbReference type="Pfam" id="PF00485">
    <property type="entry name" value="PRK"/>
    <property type="match status" value="1"/>
</dbReference>
<dbReference type="PIRSF" id="PIRSF000545">
    <property type="entry name" value="Pantothenate_kin"/>
    <property type="match status" value="1"/>
</dbReference>
<dbReference type="SUPFAM" id="SSF52540">
    <property type="entry name" value="P-loop containing nucleoside triphosphate hydrolases"/>
    <property type="match status" value="1"/>
</dbReference>
<keyword id="KW-0067">ATP-binding</keyword>
<keyword id="KW-0173">Coenzyme A biosynthesis</keyword>
<keyword id="KW-0963">Cytoplasm</keyword>
<keyword id="KW-0418">Kinase</keyword>
<keyword id="KW-0547">Nucleotide-binding</keyword>
<keyword id="KW-0808">Transferase</keyword>
<reference key="1">
    <citation type="submission" date="2007-11" db="EMBL/GenBank/DDBJ databases">
        <title>Genome sequencing of phylogenetically and phenotypically diverse Coxiella burnetii isolates.</title>
        <authorList>
            <person name="Seshadri R."/>
            <person name="Samuel J.E."/>
        </authorList>
    </citation>
    <scope>NUCLEOTIDE SEQUENCE [LARGE SCALE GENOMIC DNA]</scope>
    <source>
        <strain>RSA 331 / Henzerling II</strain>
    </source>
</reference>
<organism>
    <name type="scientific">Coxiella burnetii (strain RSA 331 / Henzerling II)</name>
    <dbReference type="NCBI Taxonomy" id="360115"/>
    <lineage>
        <taxon>Bacteria</taxon>
        <taxon>Pseudomonadati</taxon>
        <taxon>Pseudomonadota</taxon>
        <taxon>Gammaproteobacteria</taxon>
        <taxon>Legionellales</taxon>
        <taxon>Coxiellaceae</taxon>
        <taxon>Coxiella</taxon>
    </lineage>
</organism>
<feature type="chain" id="PRO_1000078056" description="Pantothenate kinase">
    <location>
        <begin position="1"/>
        <end position="318"/>
    </location>
</feature>
<feature type="binding site" evidence="1">
    <location>
        <begin position="96"/>
        <end position="103"/>
    </location>
    <ligand>
        <name>ATP</name>
        <dbReference type="ChEBI" id="CHEBI:30616"/>
    </ligand>
</feature>
<sequence>MTVKPELNEITPYLQFNRQEWGNFRKDTPLTLTESDLDKLQGQIEIVSLKEVTEIYLPLSRLLSFYVTARQTLQQATYQFLGKPEPKVPYIIGIAGSVAVGKSTTSRVLKALLSRWPDHPNVEVITTDGFLYSNAKLEKQGLMKRKGFPESYDMPSLLRVLNAIKSGQRNVRIPVYSHHYYDIVRGQYEIVDQPDIVILEGLNILQTGVRKTLQQLQVFVSDFFDFSLFVDAQAQVIQKWYIDRVLSFWRTTFKDPHSYFHYLTQMSETEVAAFAKHVWNEINKVNLMENILPYKNRAQLILEKAADHSIQKVYLRKI</sequence>
<name>COAA_COXBR</name>
<comment type="catalytic activity">
    <reaction evidence="1">
        <text>(R)-pantothenate + ATP = (R)-4'-phosphopantothenate + ADP + H(+)</text>
        <dbReference type="Rhea" id="RHEA:16373"/>
        <dbReference type="ChEBI" id="CHEBI:10986"/>
        <dbReference type="ChEBI" id="CHEBI:15378"/>
        <dbReference type="ChEBI" id="CHEBI:29032"/>
        <dbReference type="ChEBI" id="CHEBI:30616"/>
        <dbReference type="ChEBI" id="CHEBI:456216"/>
        <dbReference type="EC" id="2.7.1.33"/>
    </reaction>
</comment>
<comment type="pathway">
    <text evidence="1">Cofactor biosynthesis; coenzyme A biosynthesis; CoA from (R)-pantothenate: step 1/5.</text>
</comment>
<comment type="subcellular location">
    <subcellularLocation>
        <location evidence="1">Cytoplasm</location>
    </subcellularLocation>
</comment>
<comment type="similarity">
    <text evidence="1">Belongs to the prokaryotic pantothenate kinase family.</text>
</comment>
<proteinExistence type="inferred from homology"/>
<accession>A9NAJ3</accession>